<sequence length="503" mass="52653">MDFSIKGCDWSKGTANGFLTGKSDCIVLGVFEAQTLSGAALDIDEATKGLVSRVIKAGDIDGKLGKTLFLHEVSGIGASRVLLVGLGRQDAFSQKAYGDAAKAAWRALLGTKVVQVTFTLAQLPVPERASDWGVRAAILALRNETYKFTQMKSKPDAGAPALKRVVFSVDPADDKAAKVAAKQAVALANGMDLTRDLGNLPGNVCTPTYLANTAKKIAKDWGLKVDVLGLKQIQALKMGSFLSVAKGSVEPPQFIVLQYRGAAAKAAPVVLVGKGITFDSGGISLKPGEGMDEMKYDMCGAGSVLGTMRAVAEMGLKVNVVAIVPTCENMPAGNANKPGDIVTSMKGLTIEVLNTDAEGRLILCDALTYAERFKPAAVIDVATLTGACIIALGHHNTGLFSKDDALAGELLDASREAGDPAWRLPLDDEYQDQLKSNFADLANIGGRPAGSVTAACFLSRFAENYPWAHLDIAGTAWKSGAAKGATGRPVPLLAQFLIDRAGA</sequence>
<protein>
    <recommendedName>
        <fullName evidence="1">Probable cytosol aminopeptidase</fullName>
        <ecNumber evidence="1">3.4.11.1</ecNumber>
    </recommendedName>
    <alternativeName>
        <fullName evidence="1">Leucine aminopeptidase</fullName>
        <shortName evidence="1">LAP</shortName>
        <ecNumber evidence="1">3.4.11.10</ecNumber>
    </alternativeName>
    <alternativeName>
        <fullName evidence="1">Leucyl aminopeptidase</fullName>
    </alternativeName>
</protein>
<dbReference type="EC" id="3.4.11.1" evidence="1"/>
<dbReference type="EC" id="3.4.11.10" evidence="1"/>
<dbReference type="EMBL" id="BX571965">
    <property type="protein sequence ID" value="CAH34961.1"/>
    <property type="molecule type" value="Genomic_DNA"/>
</dbReference>
<dbReference type="RefSeq" id="WP_004522572.1">
    <property type="nucleotide sequence ID" value="NZ_CP009538.1"/>
</dbReference>
<dbReference type="RefSeq" id="YP_107593.1">
    <property type="nucleotide sequence ID" value="NC_006350.1"/>
</dbReference>
<dbReference type="SMR" id="Q63WC3"/>
<dbReference type="STRING" id="272560.BPSL0965"/>
<dbReference type="MEROPS" id="M17.003"/>
<dbReference type="KEGG" id="bps:BPSL0965"/>
<dbReference type="PATRIC" id="fig|272560.51.peg.612"/>
<dbReference type="eggNOG" id="COG0260">
    <property type="taxonomic scope" value="Bacteria"/>
</dbReference>
<dbReference type="Proteomes" id="UP000000605">
    <property type="component" value="Chromosome 1"/>
</dbReference>
<dbReference type="GO" id="GO:0005737">
    <property type="term" value="C:cytoplasm"/>
    <property type="evidence" value="ECO:0007669"/>
    <property type="project" value="UniProtKB-SubCell"/>
</dbReference>
<dbReference type="GO" id="GO:0030145">
    <property type="term" value="F:manganese ion binding"/>
    <property type="evidence" value="ECO:0007669"/>
    <property type="project" value="UniProtKB-UniRule"/>
</dbReference>
<dbReference type="GO" id="GO:0070006">
    <property type="term" value="F:metalloaminopeptidase activity"/>
    <property type="evidence" value="ECO:0007669"/>
    <property type="project" value="InterPro"/>
</dbReference>
<dbReference type="GO" id="GO:0006508">
    <property type="term" value="P:proteolysis"/>
    <property type="evidence" value="ECO:0007669"/>
    <property type="project" value="UniProtKB-KW"/>
</dbReference>
<dbReference type="CDD" id="cd00433">
    <property type="entry name" value="Peptidase_M17"/>
    <property type="match status" value="1"/>
</dbReference>
<dbReference type="FunFam" id="3.40.630.10:FF:000004">
    <property type="entry name" value="Probable cytosol aminopeptidase"/>
    <property type="match status" value="1"/>
</dbReference>
<dbReference type="Gene3D" id="3.40.220.10">
    <property type="entry name" value="Leucine Aminopeptidase, subunit E, domain 1"/>
    <property type="match status" value="1"/>
</dbReference>
<dbReference type="Gene3D" id="3.40.630.10">
    <property type="entry name" value="Zn peptidases"/>
    <property type="match status" value="1"/>
</dbReference>
<dbReference type="HAMAP" id="MF_00181">
    <property type="entry name" value="Cytosol_peptidase_M17"/>
    <property type="match status" value="1"/>
</dbReference>
<dbReference type="InterPro" id="IPR011356">
    <property type="entry name" value="Leucine_aapep/pepB"/>
</dbReference>
<dbReference type="InterPro" id="IPR043472">
    <property type="entry name" value="Macro_dom-like"/>
</dbReference>
<dbReference type="InterPro" id="IPR000819">
    <property type="entry name" value="Peptidase_M17_C"/>
</dbReference>
<dbReference type="InterPro" id="IPR023042">
    <property type="entry name" value="Peptidase_M17_leu_NH2_pept"/>
</dbReference>
<dbReference type="InterPro" id="IPR008283">
    <property type="entry name" value="Peptidase_M17_N"/>
</dbReference>
<dbReference type="NCBIfam" id="NF002073">
    <property type="entry name" value="PRK00913.1-2"/>
    <property type="match status" value="1"/>
</dbReference>
<dbReference type="NCBIfam" id="NF002074">
    <property type="entry name" value="PRK00913.1-4"/>
    <property type="match status" value="1"/>
</dbReference>
<dbReference type="NCBIfam" id="NF002077">
    <property type="entry name" value="PRK00913.2-4"/>
    <property type="match status" value="1"/>
</dbReference>
<dbReference type="NCBIfam" id="NF002083">
    <property type="entry name" value="PRK00913.3-5"/>
    <property type="match status" value="1"/>
</dbReference>
<dbReference type="PANTHER" id="PTHR11963:SF23">
    <property type="entry name" value="CYTOSOL AMINOPEPTIDASE"/>
    <property type="match status" value="1"/>
</dbReference>
<dbReference type="PANTHER" id="PTHR11963">
    <property type="entry name" value="LEUCINE AMINOPEPTIDASE-RELATED"/>
    <property type="match status" value="1"/>
</dbReference>
<dbReference type="Pfam" id="PF00883">
    <property type="entry name" value="Peptidase_M17"/>
    <property type="match status" value="1"/>
</dbReference>
<dbReference type="Pfam" id="PF02789">
    <property type="entry name" value="Peptidase_M17_N"/>
    <property type="match status" value="1"/>
</dbReference>
<dbReference type="PRINTS" id="PR00481">
    <property type="entry name" value="LAMNOPPTDASE"/>
</dbReference>
<dbReference type="SUPFAM" id="SSF52949">
    <property type="entry name" value="Macro domain-like"/>
    <property type="match status" value="1"/>
</dbReference>
<dbReference type="SUPFAM" id="SSF53187">
    <property type="entry name" value="Zn-dependent exopeptidases"/>
    <property type="match status" value="1"/>
</dbReference>
<dbReference type="PROSITE" id="PS00631">
    <property type="entry name" value="CYTOSOL_AP"/>
    <property type="match status" value="1"/>
</dbReference>
<evidence type="ECO:0000255" key="1">
    <source>
        <dbReference type="HAMAP-Rule" id="MF_00181"/>
    </source>
</evidence>
<proteinExistence type="inferred from homology"/>
<name>AMPA_BURPS</name>
<comment type="function">
    <text evidence="1">Presumably involved in the processing and regular turnover of intracellular proteins. Catalyzes the removal of unsubstituted N-terminal amino acids from various peptides.</text>
</comment>
<comment type="catalytic activity">
    <reaction evidence="1">
        <text>Release of an N-terminal amino acid, Xaa-|-Yaa-, in which Xaa is preferably Leu, but may be other amino acids including Pro although not Arg or Lys, and Yaa may be Pro. Amino acid amides and methyl esters are also readily hydrolyzed, but rates on arylamides are exceedingly low.</text>
        <dbReference type="EC" id="3.4.11.1"/>
    </reaction>
</comment>
<comment type="catalytic activity">
    <reaction evidence="1">
        <text>Release of an N-terminal amino acid, preferentially leucine, but not glutamic or aspartic acids.</text>
        <dbReference type="EC" id="3.4.11.10"/>
    </reaction>
</comment>
<comment type="cofactor">
    <cofactor evidence="1">
        <name>Mn(2+)</name>
        <dbReference type="ChEBI" id="CHEBI:29035"/>
    </cofactor>
    <text evidence="1">Binds 2 manganese ions per subunit.</text>
</comment>
<comment type="subcellular location">
    <subcellularLocation>
        <location evidence="1">Cytoplasm</location>
    </subcellularLocation>
</comment>
<comment type="similarity">
    <text evidence="1">Belongs to the peptidase M17 family.</text>
</comment>
<accession>Q63WC3</accession>
<feature type="chain" id="PRO_0000165733" description="Probable cytosol aminopeptidase">
    <location>
        <begin position="1"/>
        <end position="503"/>
    </location>
</feature>
<feature type="active site" evidence="1">
    <location>
        <position position="286"/>
    </location>
</feature>
<feature type="active site" evidence="1">
    <location>
        <position position="360"/>
    </location>
</feature>
<feature type="binding site" evidence="1">
    <location>
        <position position="274"/>
    </location>
    <ligand>
        <name>Mn(2+)</name>
        <dbReference type="ChEBI" id="CHEBI:29035"/>
        <label>2</label>
    </ligand>
</feature>
<feature type="binding site" evidence="1">
    <location>
        <position position="279"/>
    </location>
    <ligand>
        <name>Mn(2+)</name>
        <dbReference type="ChEBI" id="CHEBI:29035"/>
        <label>1</label>
    </ligand>
</feature>
<feature type="binding site" evidence="1">
    <location>
        <position position="279"/>
    </location>
    <ligand>
        <name>Mn(2+)</name>
        <dbReference type="ChEBI" id="CHEBI:29035"/>
        <label>2</label>
    </ligand>
</feature>
<feature type="binding site" evidence="1">
    <location>
        <position position="297"/>
    </location>
    <ligand>
        <name>Mn(2+)</name>
        <dbReference type="ChEBI" id="CHEBI:29035"/>
        <label>2</label>
    </ligand>
</feature>
<feature type="binding site" evidence="1">
    <location>
        <position position="356"/>
    </location>
    <ligand>
        <name>Mn(2+)</name>
        <dbReference type="ChEBI" id="CHEBI:29035"/>
        <label>1</label>
    </ligand>
</feature>
<feature type="binding site" evidence="1">
    <location>
        <position position="358"/>
    </location>
    <ligand>
        <name>Mn(2+)</name>
        <dbReference type="ChEBI" id="CHEBI:29035"/>
        <label>1</label>
    </ligand>
</feature>
<feature type="binding site" evidence="1">
    <location>
        <position position="358"/>
    </location>
    <ligand>
        <name>Mn(2+)</name>
        <dbReference type="ChEBI" id="CHEBI:29035"/>
        <label>2</label>
    </ligand>
</feature>
<reference key="1">
    <citation type="journal article" date="2004" name="Proc. Natl. Acad. Sci. U.S.A.">
        <title>Genomic plasticity of the causative agent of melioidosis, Burkholderia pseudomallei.</title>
        <authorList>
            <person name="Holden M.T.G."/>
            <person name="Titball R.W."/>
            <person name="Peacock S.J."/>
            <person name="Cerdeno-Tarraga A.-M."/>
            <person name="Atkins T."/>
            <person name="Crossman L.C."/>
            <person name="Pitt T."/>
            <person name="Churcher C."/>
            <person name="Mungall K.L."/>
            <person name="Bentley S.D."/>
            <person name="Sebaihia M."/>
            <person name="Thomson N.R."/>
            <person name="Bason N."/>
            <person name="Beacham I.R."/>
            <person name="Brooks K."/>
            <person name="Brown K.A."/>
            <person name="Brown N.F."/>
            <person name="Challis G.L."/>
            <person name="Cherevach I."/>
            <person name="Chillingworth T."/>
            <person name="Cronin A."/>
            <person name="Crossett B."/>
            <person name="Davis P."/>
            <person name="DeShazer D."/>
            <person name="Feltwell T."/>
            <person name="Fraser A."/>
            <person name="Hance Z."/>
            <person name="Hauser H."/>
            <person name="Holroyd S."/>
            <person name="Jagels K."/>
            <person name="Keith K.E."/>
            <person name="Maddison M."/>
            <person name="Moule S."/>
            <person name="Price C."/>
            <person name="Quail M.A."/>
            <person name="Rabbinowitsch E."/>
            <person name="Rutherford K."/>
            <person name="Sanders M."/>
            <person name="Simmonds M."/>
            <person name="Songsivilai S."/>
            <person name="Stevens K."/>
            <person name="Tumapa S."/>
            <person name="Vesaratchavest M."/>
            <person name="Whitehead S."/>
            <person name="Yeats C."/>
            <person name="Barrell B.G."/>
            <person name="Oyston P.C.F."/>
            <person name="Parkhill J."/>
        </authorList>
    </citation>
    <scope>NUCLEOTIDE SEQUENCE [LARGE SCALE GENOMIC DNA]</scope>
    <source>
        <strain>K96243</strain>
    </source>
</reference>
<organism>
    <name type="scientific">Burkholderia pseudomallei (strain K96243)</name>
    <dbReference type="NCBI Taxonomy" id="272560"/>
    <lineage>
        <taxon>Bacteria</taxon>
        <taxon>Pseudomonadati</taxon>
        <taxon>Pseudomonadota</taxon>
        <taxon>Betaproteobacteria</taxon>
        <taxon>Burkholderiales</taxon>
        <taxon>Burkholderiaceae</taxon>
        <taxon>Burkholderia</taxon>
        <taxon>pseudomallei group</taxon>
    </lineage>
</organism>
<gene>
    <name evidence="1" type="primary">pepA</name>
    <name type="ordered locus">BPSL0965</name>
</gene>
<keyword id="KW-0031">Aminopeptidase</keyword>
<keyword id="KW-0963">Cytoplasm</keyword>
<keyword id="KW-0378">Hydrolase</keyword>
<keyword id="KW-0464">Manganese</keyword>
<keyword id="KW-0479">Metal-binding</keyword>
<keyword id="KW-0645">Protease</keyword>
<keyword id="KW-1185">Reference proteome</keyword>